<proteinExistence type="inferred from homology"/>
<protein>
    <recommendedName>
        <fullName evidence="1">Large ribosomal subunit protein uL10</fullName>
    </recommendedName>
    <alternativeName>
        <fullName evidence="2">50S ribosomal protein L10</fullName>
    </alternativeName>
</protein>
<comment type="function">
    <text evidence="1">Forms part of the ribosomal stalk, playing a central role in the interaction of the ribosome with GTP-bound translation factors.</text>
</comment>
<comment type="subunit">
    <text evidence="1">Part of the ribosomal stalk of the 50S ribosomal subunit. The N-terminus interacts with L11 and the large rRNA to form the base of the stalk. The C-terminus forms an elongated spine to which L12 dimers bind in a sequential fashion forming a multimeric L10(L12)X complex.</text>
</comment>
<comment type="similarity">
    <text evidence="1">Belongs to the universal ribosomal protein uL10 family.</text>
</comment>
<dbReference type="EMBL" id="AL766850">
    <property type="protein sequence ID" value="CAD47034.1"/>
    <property type="molecule type" value="Genomic_DNA"/>
</dbReference>
<dbReference type="RefSeq" id="WP_001287285.1">
    <property type="nucleotide sequence ID" value="NC_004368.1"/>
</dbReference>
<dbReference type="SMR" id="Q8E4M6"/>
<dbReference type="KEGG" id="san:rplJ"/>
<dbReference type="eggNOG" id="COG0244">
    <property type="taxonomic scope" value="Bacteria"/>
</dbReference>
<dbReference type="HOGENOM" id="CLU_092227_2_0_9"/>
<dbReference type="Proteomes" id="UP000000823">
    <property type="component" value="Chromosome"/>
</dbReference>
<dbReference type="GO" id="GO:0015934">
    <property type="term" value="C:large ribosomal subunit"/>
    <property type="evidence" value="ECO:0007669"/>
    <property type="project" value="InterPro"/>
</dbReference>
<dbReference type="GO" id="GO:0070180">
    <property type="term" value="F:large ribosomal subunit rRNA binding"/>
    <property type="evidence" value="ECO:0007669"/>
    <property type="project" value="UniProtKB-UniRule"/>
</dbReference>
<dbReference type="GO" id="GO:0003735">
    <property type="term" value="F:structural constituent of ribosome"/>
    <property type="evidence" value="ECO:0007669"/>
    <property type="project" value="InterPro"/>
</dbReference>
<dbReference type="GO" id="GO:0006412">
    <property type="term" value="P:translation"/>
    <property type="evidence" value="ECO:0007669"/>
    <property type="project" value="UniProtKB-UniRule"/>
</dbReference>
<dbReference type="CDD" id="cd05797">
    <property type="entry name" value="Ribosomal_L10"/>
    <property type="match status" value="1"/>
</dbReference>
<dbReference type="FunFam" id="3.30.70.1730:FF:000001">
    <property type="entry name" value="50S ribosomal protein L10"/>
    <property type="match status" value="1"/>
</dbReference>
<dbReference type="Gene3D" id="3.30.70.1730">
    <property type="match status" value="1"/>
</dbReference>
<dbReference type="HAMAP" id="MF_00362">
    <property type="entry name" value="Ribosomal_uL10"/>
    <property type="match status" value="1"/>
</dbReference>
<dbReference type="InterPro" id="IPR001790">
    <property type="entry name" value="Ribosomal_uL10"/>
</dbReference>
<dbReference type="InterPro" id="IPR043141">
    <property type="entry name" value="Ribosomal_uL10-like_sf"/>
</dbReference>
<dbReference type="InterPro" id="IPR022973">
    <property type="entry name" value="Ribosomal_uL10_bac"/>
</dbReference>
<dbReference type="InterPro" id="IPR047865">
    <property type="entry name" value="Ribosomal_uL10_bac_type"/>
</dbReference>
<dbReference type="InterPro" id="IPR002363">
    <property type="entry name" value="Ribosomal_uL10_CS_bac"/>
</dbReference>
<dbReference type="NCBIfam" id="NF000955">
    <property type="entry name" value="PRK00099.1-1"/>
    <property type="match status" value="1"/>
</dbReference>
<dbReference type="PANTHER" id="PTHR11560">
    <property type="entry name" value="39S RIBOSOMAL PROTEIN L10, MITOCHONDRIAL"/>
    <property type="match status" value="1"/>
</dbReference>
<dbReference type="Pfam" id="PF00466">
    <property type="entry name" value="Ribosomal_L10"/>
    <property type="match status" value="1"/>
</dbReference>
<dbReference type="SUPFAM" id="SSF160369">
    <property type="entry name" value="Ribosomal protein L10-like"/>
    <property type="match status" value="1"/>
</dbReference>
<dbReference type="PROSITE" id="PS01109">
    <property type="entry name" value="RIBOSOMAL_L10"/>
    <property type="match status" value="1"/>
</dbReference>
<reference key="1">
    <citation type="journal article" date="2002" name="Mol. Microbiol.">
        <title>Genome sequence of Streptococcus agalactiae, a pathogen causing invasive neonatal disease.</title>
        <authorList>
            <person name="Glaser P."/>
            <person name="Rusniok C."/>
            <person name="Buchrieser C."/>
            <person name="Chevalier F."/>
            <person name="Frangeul L."/>
            <person name="Msadek T."/>
            <person name="Zouine M."/>
            <person name="Couve E."/>
            <person name="Lalioui L."/>
            <person name="Poyart C."/>
            <person name="Trieu-Cuot P."/>
            <person name="Kunst F."/>
        </authorList>
    </citation>
    <scope>NUCLEOTIDE SEQUENCE [LARGE SCALE GENOMIC DNA]</scope>
    <source>
        <strain>NEM316</strain>
    </source>
</reference>
<gene>
    <name evidence="1" type="primary">rplJ</name>
    <name type="ordered locus">gbs1375</name>
</gene>
<sequence>MSEAIIAKKAEQVELIAEKMKAAASIVVVDSRGLTVEQDTNLRRSLRESDVEFKVIKNSILIRAAEKAGLEDLKELFVGPSAVAFSNEDVIAPAKVISDFAKDAEALEIKGGSVDGKFTSVEEINALAKLPNKEGMLSMLLSVLQAPVRNVAYAVKAVAEKDEEVA</sequence>
<feature type="chain" id="PRO_0000154715" description="Large ribosomal subunit protein uL10">
    <location>
        <begin position="1"/>
        <end position="166"/>
    </location>
</feature>
<organism>
    <name type="scientific">Streptococcus agalactiae serotype III (strain NEM316)</name>
    <dbReference type="NCBI Taxonomy" id="211110"/>
    <lineage>
        <taxon>Bacteria</taxon>
        <taxon>Bacillati</taxon>
        <taxon>Bacillota</taxon>
        <taxon>Bacilli</taxon>
        <taxon>Lactobacillales</taxon>
        <taxon>Streptococcaceae</taxon>
        <taxon>Streptococcus</taxon>
    </lineage>
</organism>
<keyword id="KW-0687">Ribonucleoprotein</keyword>
<keyword id="KW-0689">Ribosomal protein</keyword>
<keyword id="KW-0694">RNA-binding</keyword>
<keyword id="KW-0699">rRNA-binding</keyword>
<accession>Q8E4M6</accession>
<name>RL10_STRA3</name>
<evidence type="ECO:0000255" key="1">
    <source>
        <dbReference type="HAMAP-Rule" id="MF_00362"/>
    </source>
</evidence>
<evidence type="ECO:0000305" key="2"/>